<protein>
    <recommendedName>
        <fullName>Zinc finger protein CONSTANS-LIKE 13</fullName>
    </recommendedName>
</protein>
<sequence>MEAEEGHQRDRLCDYCDSSVALVYCKADSAKLCLACDKQVHVANQLFAKHFRSLLCDSCNESPSSLFCETERSVLCQNCDWQHHTASSSLHSRRPFEGFTGCPSVPELLAIVGLDDLTLDSGLLWESPEIVSLNDLIVSGGSGTHNFRATDVPPLPKNRHATCGKYKDEMIRQLRGLSRSEPGCLKFETPDAEIDAGFQFLAPDLFSTCELESGLKWFDQQDHEDFPYCSLLKNLSESDEKPENVDRESSVMVPVSGCLNRCEEETVMVPVITSTRSMTHEINSLERNSALSRYKEKKKSRRYEKHIRYESRKVRAESRTRIRGRFAKAADP</sequence>
<name>COL13_ARATH</name>
<accession>O82256</accession>
<accession>Q7GAB9</accession>
<dbReference type="EMBL" id="AC005309">
    <property type="protein sequence ID" value="AAC63643.1"/>
    <property type="molecule type" value="Genomic_DNA"/>
</dbReference>
<dbReference type="EMBL" id="AC006072">
    <property type="protein sequence ID" value="AAM15120.1"/>
    <property type="molecule type" value="Genomic_DNA"/>
</dbReference>
<dbReference type="EMBL" id="CP002685">
    <property type="protein sequence ID" value="AEC10906.1"/>
    <property type="molecule type" value="Genomic_DNA"/>
</dbReference>
<dbReference type="EMBL" id="BT023413">
    <property type="protein sequence ID" value="AAY56404.1"/>
    <property type="molecule type" value="mRNA"/>
</dbReference>
<dbReference type="PIR" id="G84920">
    <property type="entry name" value="G84920"/>
</dbReference>
<dbReference type="RefSeq" id="NP_182310.1">
    <molecule id="O82256-1"/>
    <property type="nucleotide sequence ID" value="NM_130356.5"/>
</dbReference>
<dbReference type="SMR" id="O82256"/>
<dbReference type="BioGRID" id="4736">
    <property type="interactions" value="21"/>
</dbReference>
<dbReference type="FunCoup" id="O82256">
    <property type="interactions" value="97"/>
</dbReference>
<dbReference type="IntAct" id="O82256">
    <property type="interactions" value="20"/>
</dbReference>
<dbReference type="STRING" id="3702.O82256"/>
<dbReference type="iPTMnet" id="O82256"/>
<dbReference type="PaxDb" id="3702-AT2G47890.1"/>
<dbReference type="EnsemblPlants" id="AT2G47890.1">
    <molecule id="O82256-1"/>
    <property type="protein sequence ID" value="AT2G47890.1"/>
    <property type="gene ID" value="AT2G47890"/>
</dbReference>
<dbReference type="GeneID" id="819401"/>
<dbReference type="Gramene" id="AT2G47890.1">
    <molecule id="O82256-1"/>
    <property type="protein sequence ID" value="AT2G47890.1"/>
    <property type="gene ID" value="AT2G47890"/>
</dbReference>
<dbReference type="KEGG" id="ath:AT2G47890"/>
<dbReference type="Araport" id="AT2G47890"/>
<dbReference type="TAIR" id="AT2G47890"/>
<dbReference type="eggNOG" id="ENOG502QVV7">
    <property type="taxonomic scope" value="Eukaryota"/>
</dbReference>
<dbReference type="HOGENOM" id="CLU_028225_0_1_1"/>
<dbReference type="InParanoid" id="O82256"/>
<dbReference type="OMA" id="TPCHGFQ"/>
<dbReference type="OrthoDB" id="153872at2759"/>
<dbReference type="PhylomeDB" id="O82256"/>
<dbReference type="PRO" id="PR:O82256"/>
<dbReference type="Proteomes" id="UP000006548">
    <property type="component" value="Chromosome 2"/>
</dbReference>
<dbReference type="ExpressionAtlas" id="O82256">
    <property type="expression patterns" value="baseline and differential"/>
</dbReference>
<dbReference type="GO" id="GO:0005634">
    <property type="term" value="C:nucleus"/>
    <property type="evidence" value="ECO:0007669"/>
    <property type="project" value="UniProtKB-SubCell"/>
</dbReference>
<dbReference type="GO" id="GO:0003677">
    <property type="term" value="F:DNA binding"/>
    <property type="evidence" value="ECO:0000353"/>
    <property type="project" value="TAIR"/>
</dbReference>
<dbReference type="GO" id="GO:0003700">
    <property type="term" value="F:DNA-binding transcription factor activity"/>
    <property type="evidence" value="ECO:0000250"/>
    <property type="project" value="TAIR"/>
</dbReference>
<dbReference type="GO" id="GO:0000976">
    <property type="term" value="F:transcription cis-regulatory region binding"/>
    <property type="evidence" value="ECO:0000353"/>
    <property type="project" value="TAIR"/>
</dbReference>
<dbReference type="GO" id="GO:0008270">
    <property type="term" value="F:zinc ion binding"/>
    <property type="evidence" value="ECO:0007669"/>
    <property type="project" value="UniProtKB-KW"/>
</dbReference>
<dbReference type="GO" id="GO:0007623">
    <property type="term" value="P:circadian rhythm"/>
    <property type="evidence" value="ECO:0000270"/>
    <property type="project" value="TAIR"/>
</dbReference>
<dbReference type="GO" id="GO:0006355">
    <property type="term" value="P:regulation of DNA-templated transcription"/>
    <property type="evidence" value="ECO:0000304"/>
    <property type="project" value="TAIR"/>
</dbReference>
<dbReference type="GO" id="GO:0009637">
    <property type="term" value="P:response to blue light"/>
    <property type="evidence" value="ECO:0000270"/>
    <property type="project" value="TAIR"/>
</dbReference>
<dbReference type="GO" id="GO:0010218">
    <property type="term" value="P:response to far red light"/>
    <property type="evidence" value="ECO:0000270"/>
    <property type="project" value="TAIR"/>
</dbReference>
<dbReference type="GO" id="GO:0009416">
    <property type="term" value="P:response to light stimulus"/>
    <property type="evidence" value="ECO:0000270"/>
    <property type="project" value="TAIR"/>
</dbReference>
<dbReference type="GO" id="GO:0010114">
    <property type="term" value="P:response to red light"/>
    <property type="evidence" value="ECO:0000270"/>
    <property type="project" value="TAIR"/>
</dbReference>
<dbReference type="CDD" id="cd19821">
    <property type="entry name" value="Bbox1_BBX-like"/>
    <property type="match status" value="2"/>
</dbReference>
<dbReference type="InterPro" id="IPR010402">
    <property type="entry name" value="CCT_domain"/>
</dbReference>
<dbReference type="InterPro" id="IPR049808">
    <property type="entry name" value="CONSTANS-like_Bbox1"/>
</dbReference>
<dbReference type="InterPro" id="IPR000315">
    <property type="entry name" value="Znf_B-box"/>
</dbReference>
<dbReference type="PANTHER" id="PTHR31717">
    <property type="entry name" value="ZINC FINGER PROTEIN CONSTANS-LIKE 10"/>
    <property type="match status" value="1"/>
</dbReference>
<dbReference type="PANTHER" id="PTHR31717:SF58">
    <property type="entry name" value="ZINC FINGER PROTEIN CONSTANS-LIKE 13"/>
    <property type="match status" value="1"/>
</dbReference>
<dbReference type="Pfam" id="PF06203">
    <property type="entry name" value="CCT"/>
    <property type="match status" value="1"/>
</dbReference>
<dbReference type="Pfam" id="PF00643">
    <property type="entry name" value="zf-B_box"/>
    <property type="match status" value="1"/>
</dbReference>
<dbReference type="SMART" id="SM00336">
    <property type="entry name" value="BBOX"/>
    <property type="match status" value="2"/>
</dbReference>
<dbReference type="PROSITE" id="PS51017">
    <property type="entry name" value="CCT"/>
    <property type="match status" value="1"/>
</dbReference>
<dbReference type="PROSITE" id="PS50119">
    <property type="entry name" value="ZF_BBOX"/>
    <property type="match status" value="2"/>
</dbReference>
<organism>
    <name type="scientific">Arabidopsis thaliana</name>
    <name type="common">Mouse-ear cress</name>
    <dbReference type="NCBI Taxonomy" id="3702"/>
    <lineage>
        <taxon>Eukaryota</taxon>
        <taxon>Viridiplantae</taxon>
        <taxon>Streptophyta</taxon>
        <taxon>Embryophyta</taxon>
        <taxon>Tracheophyta</taxon>
        <taxon>Spermatophyta</taxon>
        <taxon>Magnoliopsida</taxon>
        <taxon>eudicotyledons</taxon>
        <taxon>Gunneridae</taxon>
        <taxon>Pentapetalae</taxon>
        <taxon>rosids</taxon>
        <taxon>malvids</taxon>
        <taxon>Brassicales</taxon>
        <taxon>Brassicaceae</taxon>
        <taxon>Camelineae</taxon>
        <taxon>Arabidopsis</taxon>
    </lineage>
</organism>
<comment type="interaction">
    <interactant intactId="EBI-15191569">
        <id>O82256</id>
    </interactant>
    <interactant intactId="EBI-15191571">
        <id>Q4PSE2</id>
        <label>NFYC8</label>
    </interactant>
    <organismsDiffer>false</organismsDiffer>
    <experiments>3</experiments>
</comment>
<comment type="subcellular location">
    <subcellularLocation>
        <location evidence="2">Nucleus</location>
    </subcellularLocation>
</comment>
<comment type="alternative products">
    <event type="alternative splicing"/>
    <isoform>
        <id>O82256-1</id>
        <name>1</name>
        <sequence type="displayed"/>
    </isoform>
    <text>A number of isoforms are produced. According to EST sequences.</text>
</comment>
<comment type="similarity">
    <text evidence="3">Belongs to the CONSTANS family.</text>
</comment>
<evidence type="ECO:0000255" key="1">
    <source>
        <dbReference type="PROSITE-ProRule" id="PRU00024"/>
    </source>
</evidence>
<evidence type="ECO:0000255" key="2">
    <source>
        <dbReference type="PROSITE-ProRule" id="PRU00357"/>
    </source>
</evidence>
<evidence type="ECO:0000305" key="3"/>
<reference key="1">
    <citation type="journal article" date="1999" name="Nature">
        <title>Sequence and analysis of chromosome 2 of the plant Arabidopsis thaliana.</title>
        <authorList>
            <person name="Lin X."/>
            <person name="Kaul S."/>
            <person name="Rounsley S.D."/>
            <person name="Shea T.P."/>
            <person name="Benito M.-I."/>
            <person name="Town C.D."/>
            <person name="Fujii C.Y."/>
            <person name="Mason T.M."/>
            <person name="Bowman C.L."/>
            <person name="Barnstead M.E."/>
            <person name="Feldblyum T.V."/>
            <person name="Buell C.R."/>
            <person name="Ketchum K.A."/>
            <person name="Lee J.J."/>
            <person name="Ronning C.M."/>
            <person name="Koo H.L."/>
            <person name="Moffat K.S."/>
            <person name="Cronin L.A."/>
            <person name="Shen M."/>
            <person name="Pai G."/>
            <person name="Van Aken S."/>
            <person name="Umayam L."/>
            <person name="Tallon L.J."/>
            <person name="Gill J.E."/>
            <person name="Adams M.D."/>
            <person name="Carrera A.J."/>
            <person name="Creasy T.H."/>
            <person name="Goodman H.M."/>
            <person name="Somerville C.R."/>
            <person name="Copenhaver G.P."/>
            <person name="Preuss D."/>
            <person name="Nierman W.C."/>
            <person name="White O."/>
            <person name="Eisen J.A."/>
            <person name="Salzberg S.L."/>
            <person name="Fraser C.M."/>
            <person name="Venter J.C."/>
        </authorList>
    </citation>
    <scope>NUCLEOTIDE SEQUENCE [LARGE SCALE GENOMIC DNA]</scope>
    <source>
        <strain>cv. Columbia</strain>
    </source>
</reference>
<reference key="2">
    <citation type="journal article" date="2017" name="Plant J.">
        <title>Araport11: a complete reannotation of the Arabidopsis thaliana reference genome.</title>
        <authorList>
            <person name="Cheng C.Y."/>
            <person name="Krishnakumar V."/>
            <person name="Chan A.P."/>
            <person name="Thibaud-Nissen F."/>
            <person name="Schobel S."/>
            <person name="Town C.D."/>
        </authorList>
    </citation>
    <scope>GENOME REANNOTATION</scope>
    <source>
        <strain>cv. Columbia</strain>
    </source>
</reference>
<reference key="3">
    <citation type="submission" date="2005-05" db="EMBL/GenBank/DDBJ databases">
        <title>Arabidopsis ORF clones.</title>
        <authorList>
            <person name="Kim C.J."/>
            <person name="Chen H."/>
            <person name="Cheuk R.F."/>
            <person name="Shinn P."/>
            <person name="Ecker J.R."/>
        </authorList>
    </citation>
    <scope>NUCLEOTIDE SEQUENCE [LARGE SCALE MRNA]</scope>
    <source>
        <strain>cv. Columbia</strain>
    </source>
</reference>
<reference key="4">
    <citation type="journal article" date="2003" name="Plant Physiol.">
        <title>The evolution of CONSTANS-like gene families in barley, rice, and Arabidopsis.</title>
        <authorList>
            <person name="Griffiths S."/>
            <person name="Dunford R.P."/>
            <person name="Coupland G."/>
            <person name="Laurie D.A."/>
        </authorList>
    </citation>
    <scope>GENE FAMILY</scope>
    <scope>NOMENCLATURE</scope>
</reference>
<proteinExistence type="evidence at protein level"/>
<gene>
    <name type="primary">COL13</name>
    <name type="ordered locus">At2g47890</name>
    <name type="ORF">F17A22.28</name>
    <name type="ORF">T9J23</name>
</gene>
<feature type="chain" id="PRO_0000113290" description="Zinc finger protein CONSTANS-LIKE 13">
    <location>
        <begin position="1"/>
        <end position="332"/>
    </location>
</feature>
<feature type="domain" description="CCT" evidence="2">
    <location>
        <begin position="287"/>
        <end position="329"/>
    </location>
</feature>
<feature type="zinc finger region" description="B box-type 1; atypical" evidence="1">
    <location>
        <begin position="13"/>
        <end position="55"/>
    </location>
</feature>
<feature type="zinc finger region" description="B box-type 2; atypical" evidence="1">
    <location>
        <begin position="56"/>
        <end position="96"/>
    </location>
</feature>
<feature type="binding site" evidence="1">
    <location>
        <position position="13"/>
    </location>
    <ligand>
        <name>Zn(2+)</name>
        <dbReference type="ChEBI" id="CHEBI:29105"/>
        <label>1</label>
    </ligand>
</feature>
<feature type="binding site" evidence="1">
    <location>
        <position position="16"/>
    </location>
    <ligand>
        <name>Zn(2+)</name>
        <dbReference type="ChEBI" id="CHEBI:29105"/>
        <label>1</label>
    </ligand>
</feature>
<feature type="binding site" evidence="1">
    <location>
        <position position="36"/>
    </location>
    <ligand>
        <name>Zn(2+)</name>
        <dbReference type="ChEBI" id="CHEBI:29105"/>
        <label>1</label>
    </ligand>
</feature>
<feature type="binding site" evidence="1">
    <location>
        <position position="41"/>
    </location>
    <ligand>
        <name>Zn(2+)</name>
        <dbReference type="ChEBI" id="CHEBI:29105"/>
        <label>1</label>
    </ligand>
</feature>
<feature type="binding site" evidence="1">
    <location>
        <position position="56"/>
    </location>
    <ligand>
        <name>Zn(2+)</name>
        <dbReference type="ChEBI" id="CHEBI:29105"/>
        <label>2</label>
    </ligand>
</feature>
<feature type="binding site" evidence="1">
    <location>
        <position position="59"/>
    </location>
    <ligand>
        <name>Zn(2+)</name>
        <dbReference type="ChEBI" id="CHEBI:29105"/>
        <label>2</label>
    </ligand>
</feature>
<feature type="binding site" evidence="1">
    <location>
        <position position="79"/>
    </location>
    <ligand>
        <name>Zn(2+)</name>
        <dbReference type="ChEBI" id="CHEBI:29105"/>
        <label>2</label>
    </ligand>
</feature>
<feature type="binding site" evidence="1">
    <location>
        <position position="84"/>
    </location>
    <ligand>
        <name>Zn(2+)</name>
        <dbReference type="ChEBI" id="CHEBI:29105"/>
        <label>2</label>
    </ligand>
</feature>
<keyword id="KW-0025">Alternative splicing</keyword>
<keyword id="KW-0479">Metal-binding</keyword>
<keyword id="KW-0539">Nucleus</keyword>
<keyword id="KW-1185">Reference proteome</keyword>
<keyword id="KW-0677">Repeat</keyword>
<keyword id="KW-0862">Zinc</keyword>
<keyword id="KW-0863">Zinc-finger</keyword>